<accession>Q5RA70</accession>
<comment type="function">
    <text evidence="1 2">Part of the endoplasmic reticulum membrane protein complex (EMC) that enables the energy-independent insertion into endoplasmic reticulum membranes of newly synthesized membrane proteins. Preferentially accommodates proteins with transmembrane domains that are weakly hydrophobic or contain destabilizing features such as charged and aromatic residues. Involved in the cotranslational insertion of multi-pass membrane proteins in which stop-transfer membrane-anchor sequences become ER membrane spanning helices. It is also required for the post-translational insertion of tail-anchored/TA proteins in endoplasmic reticulum membranes. By mediating the proper cotranslational insertion of N-terminal transmembrane domains in an N-exo topology, with translocated N-terminus in the lumen of the ER, controls the topology of multi-pass membrane proteins like the G protein-coupled receptors (By similarity). By regulating the insertion of various proteins in membranes, it is indirectly involved in many cellular processes. May be involved in Mg(2+) transport (By similarity).</text>
</comment>
<comment type="subunit">
    <text evidence="2">Component of the ER membrane protein complex (EMC).</text>
</comment>
<comment type="subcellular location">
    <subcellularLocation>
        <location evidence="2">Endoplasmic reticulum membrane</location>
        <topology evidence="2">Multi-pass membrane protein</topology>
    </subcellularLocation>
    <subcellularLocation>
        <location evidence="1">Golgi apparatus membrane</location>
        <topology evidence="2">Multi-pass membrane protein</topology>
    </subcellularLocation>
    <subcellularLocation>
        <location evidence="1">Early endosome membrane</location>
        <topology evidence="2">Multi-pass membrane protein</topology>
    </subcellularLocation>
</comment>
<comment type="similarity">
    <text evidence="3">Belongs to the membrane magnesium transporter (TC 1.A.67) family.</text>
</comment>
<evidence type="ECO:0000250" key="1">
    <source>
        <dbReference type="UniProtKB" id="Q8K273"/>
    </source>
</evidence>
<evidence type="ECO:0000250" key="2">
    <source>
        <dbReference type="UniProtKB" id="Q8N4V1"/>
    </source>
</evidence>
<evidence type="ECO:0000305" key="3"/>
<gene>
    <name evidence="1" type="primary">MMGT1</name>
    <name evidence="2" type="synonym">EMC5</name>
</gene>
<protein>
    <recommendedName>
        <fullName evidence="2">ER membrane protein complex subunit 5</fullName>
    </recommendedName>
    <alternativeName>
        <fullName evidence="1">Membrane magnesium transporter 1</fullName>
    </alternativeName>
</protein>
<proteinExistence type="evidence at transcript level"/>
<reference key="1">
    <citation type="submission" date="2004-11" db="EMBL/GenBank/DDBJ databases">
        <authorList>
            <consortium name="The German cDNA consortium"/>
        </authorList>
    </citation>
    <scope>NUCLEOTIDE SEQUENCE [LARGE SCALE MRNA]</scope>
    <source>
        <tissue>Brain cortex</tissue>
    </source>
</reference>
<keyword id="KW-0256">Endoplasmic reticulum</keyword>
<keyword id="KW-0967">Endosome</keyword>
<keyword id="KW-0333">Golgi apparatus</keyword>
<keyword id="KW-0460">Magnesium</keyword>
<keyword id="KW-0472">Membrane</keyword>
<keyword id="KW-0597">Phosphoprotein</keyword>
<keyword id="KW-1185">Reference proteome</keyword>
<keyword id="KW-0812">Transmembrane</keyword>
<keyword id="KW-1133">Transmembrane helix</keyword>
<keyword id="KW-0813">Transport</keyword>
<feature type="chain" id="PRO_0000286437" description="ER membrane protein complex subunit 5">
    <location>
        <begin position="1"/>
        <end position="131"/>
    </location>
</feature>
<feature type="topological domain" description="Cytoplasmic" evidence="2">
    <location>
        <begin position="1"/>
        <end position="3"/>
    </location>
</feature>
<feature type="transmembrane region" description="Helical" evidence="2">
    <location>
        <begin position="4"/>
        <end position="22"/>
    </location>
</feature>
<feature type="topological domain" description="Lumenal" evidence="2">
    <location>
        <begin position="23"/>
        <end position="43"/>
    </location>
</feature>
<feature type="transmembrane region" description="Helical" evidence="2">
    <location>
        <begin position="44"/>
        <end position="63"/>
    </location>
</feature>
<feature type="topological domain" description="Cytoplasmic" evidence="2">
    <location>
        <begin position="64"/>
        <end position="131"/>
    </location>
</feature>
<feature type="modified residue" description="Phosphoserine" evidence="2">
    <location>
        <position position="120"/>
    </location>
</feature>
<name>EMC5_PONAB</name>
<dbReference type="EMBL" id="CR859149">
    <property type="protein sequence ID" value="CAH91340.1"/>
    <property type="molecule type" value="mRNA"/>
</dbReference>
<dbReference type="RefSeq" id="NP_001127405.1">
    <property type="nucleotide sequence ID" value="NM_001133933.1"/>
</dbReference>
<dbReference type="SMR" id="Q5RA70"/>
<dbReference type="STRING" id="9601.ENSPPYP00000023236"/>
<dbReference type="GeneID" id="100174475"/>
<dbReference type="KEGG" id="pon:100174475"/>
<dbReference type="CTD" id="93380"/>
<dbReference type="eggNOG" id="KOG3918">
    <property type="taxonomic scope" value="Eukaryota"/>
</dbReference>
<dbReference type="InParanoid" id="Q5RA70"/>
<dbReference type="OrthoDB" id="44756at2759"/>
<dbReference type="Proteomes" id="UP000001595">
    <property type="component" value="Unplaced"/>
</dbReference>
<dbReference type="GO" id="GO:0005769">
    <property type="term" value="C:early endosome"/>
    <property type="evidence" value="ECO:0000250"/>
    <property type="project" value="UniProtKB"/>
</dbReference>
<dbReference type="GO" id="GO:0031901">
    <property type="term" value="C:early endosome membrane"/>
    <property type="evidence" value="ECO:0007669"/>
    <property type="project" value="UniProtKB-SubCell"/>
</dbReference>
<dbReference type="GO" id="GO:0072546">
    <property type="term" value="C:EMC complex"/>
    <property type="evidence" value="ECO:0000250"/>
    <property type="project" value="UniProtKB"/>
</dbReference>
<dbReference type="GO" id="GO:0005789">
    <property type="term" value="C:endoplasmic reticulum membrane"/>
    <property type="evidence" value="ECO:0000250"/>
    <property type="project" value="UniProtKB"/>
</dbReference>
<dbReference type="GO" id="GO:0005794">
    <property type="term" value="C:Golgi apparatus"/>
    <property type="evidence" value="ECO:0000250"/>
    <property type="project" value="UniProtKB"/>
</dbReference>
<dbReference type="GO" id="GO:0000139">
    <property type="term" value="C:Golgi membrane"/>
    <property type="evidence" value="ECO:0007669"/>
    <property type="project" value="UniProtKB-SubCell"/>
</dbReference>
<dbReference type="GO" id="GO:0016020">
    <property type="term" value="C:membrane"/>
    <property type="evidence" value="ECO:0000250"/>
    <property type="project" value="UniProtKB"/>
</dbReference>
<dbReference type="GO" id="GO:0005886">
    <property type="term" value="C:plasma membrane"/>
    <property type="evidence" value="ECO:0007669"/>
    <property type="project" value="TreeGrafter"/>
</dbReference>
<dbReference type="GO" id="GO:0015095">
    <property type="term" value="F:magnesium ion transmembrane transporter activity"/>
    <property type="evidence" value="ECO:0000250"/>
    <property type="project" value="UniProtKB"/>
</dbReference>
<dbReference type="GO" id="GO:0015693">
    <property type="term" value="P:magnesium ion transport"/>
    <property type="evidence" value="ECO:0000250"/>
    <property type="project" value="UniProtKB"/>
</dbReference>
<dbReference type="GO" id="GO:0045050">
    <property type="term" value="P:protein insertion into ER membrane by stop-transfer membrane-anchor sequence"/>
    <property type="evidence" value="ECO:0000250"/>
    <property type="project" value="UniProtKB"/>
</dbReference>
<dbReference type="GO" id="GO:0071816">
    <property type="term" value="P:tail-anchored membrane protein insertion into ER membrane"/>
    <property type="evidence" value="ECO:0000250"/>
    <property type="project" value="UniProtKB"/>
</dbReference>
<dbReference type="InterPro" id="IPR018937">
    <property type="entry name" value="MMgT"/>
</dbReference>
<dbReference type="PANTHER" id="PTHR21181">
    <property type="match status" value="1"/>
</dbReference>
<dbReference type="PANTHER" id="PTHR21181:SF7">
    <property type="entry name" value="ER MEMBRANE PROTEIN COMPLEX SUBUNIT 5"/>
    <property type="match status" value="1"/>
</dbReference>
<dbReference type="Pfam" id="PF10270">
    <property type="entry name" value="MMgT"/>
    <property type="match status" value="1"/>
</dbReference>
<sequence>MAPSLWKGLVGIGLFALAHAALSAAQHRSYMRLTEKEDESLPIDIVLQTLLAFAVTCYGIVHIAGEFKDMDATSELKNKTFDTLRNHPSFYVFNHRGRVLFRPSDTANSSNQDALSSNTSLKLRKLESLRR</sequence>
<organism>
    <name type="scientific">Pongo abelii</name>
    <name type="common">Sumatran orangutan</name>
    <name type="synonym">Pongo pygmaeus abelii</name>
    <dbReference type="NCBI Taxonomy" id="9601"/>
    <lineage>
        <taxon>Eukaryota</taxon>
        <taxon>Metazoa</taxon>
        <taxon>Chordata</taxon>
        <taxon>Craniata</taxon>
        <taxon>Vertebrata</taxon>
        <taxon>Euteleostomi</taxon>
        <taxon>Mammalia</taxon>
        <taxon>Eutheria</taxon>
        <taxon>Euarchontoglires</taxon>
        <taxon>Primates</taxon>
        <taxon>Haplorrhini</taxon>
        <taxon>Catarrhini</taxon>
        <taxon>Hominidae</taxon>
        <taxon>Pongo</taxon>
    </lineage>
</organism>